<sequence length="174" mass="18800">MAPPPPSPPAVSLKVLLLLLRVLTGVFLVIALIILSTNSVTIVSQGSALKFHFKDVYAYRYMLSAAVIGLVYAVIQLFFTISEFATGVKNPFNYQLDFYGDKLISYLVATGSAAGFGVTKDLKDTFLALVALDSTDPVDKFFSKGYASASLLLFAFICLAVLSVFSSFAMAKRN</sequence>
<proteinExistence type="evidence at transcript level"/>
<comment type="subunit">
    <text evidence="1">Homodimer and heterodimers.</text>
</comment>
<comment type="subcellular location">
    <subcellularLocation>
        <location evidence="1">Cell membrane</location>
        <topology evidence="1">Multi-pass membrane protein</topology>
    </subcellularLocation>
</comment>
<comment type="similarity">
    <text evidence="3">Belongs to the Casparian strip membrane proteins (CASP) family.</text>
</comment>
<name>CSPLB_ARATH</name>
<keyword id="KW-1003">Cell membrane</keyword>
<keyword id="KW-0472">Membrane</keyword>
<keyword id="KW-1185">Reference proteome</keyword>
<keyword id="KW-0812">Transmembrane</keyword>
<keyword id="KW-1133">Transmembrane helix</keyword>
<evidence type="ECO:0000250" key="1"/>
<evidence type="ECO:0000255" key="2"/>
<evidence type="ECO:0000305" key="3"/>
<dbReference type="EMBL" id="AC004218">
    <property type="status" value="NOT_ANNOTATED_CDS"/>
    <property type="molecule type" value="Genomic_DNA"/>
</dbReference>
<dbReference type="EMBL" id="CP002685">
    <property type="protein sequence ID" value="AEC09689.1"/>
    <property type="molecule type" value="Genomic_DNA"/>
</dbReference>
<dbReference type="EMBL" id="AK221802">
    <property type="protein sequence ID" value="BAD93967.1"/>
    <property type="molecule type" value="mRNA"/>
</dbReference>
<dbReference type="RefSeq" id="NP_001078023.1">
    <property type="nucleotide sequence ID" value="NM_001084554.2"/>
</dbReference>
<dbReference type="FunCoup" id="Q56X75">
    <property type="interactions" value="5"/>
</dbReference>
<dbReference type="PaxDb" id="3702-AT2G39518.1"/>
<dbReference type="ProteomicsDB" id="222705"/>
<dbReference type="EnsemblPlants" id="AT2G39518.1">
    <property type="protein sequence ID" value="AT2G39518.1"/>
    <property type="gene ID" value="AT2G39518"/>
</dbReference>
<dbReference type="GeneID" id="5007945"/>
<dbReference type="Gramene" id="AT2G39518.1">
    <property type="protein sequence ID" value="AT2G39518.1"/>
    <property type="gene ID" value="AT2G39518"/>
</dbReference>
<dbReference type="KEGG" id="ath:AT2G39518"/>
<dbReference type="Araport" id="AT2G39518"/>
<dbReference type="TAIR" id="AT2G39518">
    <property type="gene designation" value="CASPL4D2"/>
</dbReference>
<dbReference type="eggNOG" id="ENOG502S98H">
    <property type="taxonomic scope" value="Eukaryota"/>
</dbReference>
<dbReference type="HOGENOM" id="CLU_115129_0_0_1"/>
<dbReference type="InParanoid" id="Q56X75"/>
<dbReference type="OMA" id="IGNAYSL"/>
<dbReference type="PhylomeDB" id="Q56X75"/>
<dbReference type="PRO" id="PR:Q56X75"/>
<dbReference type="Proteomes" id="UP000006548">
    <property type="component" value="Chromosome 2"/>
</dbReference>
<dbReference type="ExpressionAtlas" id="Q56X75">
    <property type="expression patterns" value="baseline and differential"/>
</dbReference>
<dbReference type="GO" id="GO:0005886">
    <property type="term" value="C:plasma membrane"/>
    <property type="evidence" value="ECO:0007669"/>
    <property type="project" value="UniProtKB-SubCell"/>
</dbReference>
<dbReference type="InterPro" id="IPR006702">
    <property type="entry name" value="CASP_dom"/>
</dbReference>
<dbReference type="PANTHER" id="PTHR33573">
    <property type="entry name" value="CASP-LIKE PROTEIN 4A4"/>
    <property type="match status" value="1"/>
</dbReference>
<dbReference type="PANTHER" id="PTHR33573:SF40">
    <property type="entry name" value="CASP-LIKE PROTEIN 4D2"/>
    <property type="match status" value="1"/>
</dbReference>
<dbReference type="Pfam" id="PF04535">
    <property type="entry name" value="CASP_dom"/>
    <property type="match status" value="1"/>
</dbReference>
<organism>
    <name type="scientific">Arabidopsis thaliana</name>
    <name type="common">Mouse-ear cress</name>
    <dbReference type="NCBI Taxonomy" id="3702"/>
    <lineage>
        <taxon>Eukaryota</taxon>
        <taxon>Viridiplantae</taxon>
        <taxon>Streptophyta</taxon>
        <taxon>Embryophyta</taxon>
        <taxon>Tracheophyta</taxon>
        <taxon>Spermatophyta</taxon>
        <taxon>Magnoliopsida</taxon>
        <taxon>eudicotyledons</taxon>
        <taxon>Gunneridae</taxon>
        <taxon>Pentapetalae</taxon>
        <taxon>rosids</taxon>
        <taxon>malvids</taxon>
        <taxon>Brassicales</taxon>
        <taxon>Brassicaceae</taxon>
        <taxon>Camelineae</taxon>
        <taxon>Arabidopsis</taxon>
    </lineage>
</organism>
<reference key="1">
    <citation type="journal article" date="1999" name="Nature">
        <title>Sequence and analysis of chromosome 2 of the plant Arabidopsis thaliana.</title>
        <authorList>
            <person name="Lin X."/>
            <person name="Kaul S."/>
            <person name="Rounsley S.D."/>
            <person name="Shea T.P."/>
            <person name="Benito M.-I."/>
            <person name="Town C.D."/>
            <person name="Fujii C.Y."/>
            <person name="Mason T.M."/>
            <person name="Bowman C.L."/>
            <person name="Barnstead M.E."/>
            <person name="Feldblyum T.V."/>
            <person name="Buell C.R."/>
            <person name="Ketchum K.A."/>
            <person name="Lee J.J."/>
            <person name="Ronning C.M."/>
            <person name="Koo H.L."/>
            <person name="Moffat K.S."/>
            <person name="Cronin L.A."/>
            <person name="Shen M."/>
            <person name="Pai G."/>
            <person name="Van Aken S."/>
            <person name="Umayam L."/>
            <person name="Tallon L.J."/>
            <person name="Gill J.E."/>
            <person name="Adams M.D."/>
            <person name="Carrera A.J."/>
            <person name="Creasy T.H."/>
            <person name="Goodman H.M."/>
            <person name="Somerville C.R."/>
            <person name="Copenhaver G.P."/>
            <person name="Preuss D."/>
            <person name="Nierman W.C."/>
            <person name="White O."/>
            <person name="Eisen J.A."/>
            <person name="Salzberg S.L."/>
            <person name="Fraser C.M."/>
            <person name="Venter J.C."/>
        </authorList>
    </citation>
    <scope>NUCLEOTIDE SEQUENCE [LARGE SCALE GENOMIC DNA]</scope>
    <source>
        <strain>cv. Columbia</strain>
    </source>
</reference>
<reference key="2">
    <citation type="journal article" date="2017" name="Plant J.">
        <title>Araport11: a complete reannotation of the Arabidopsis thaliana reference genome.</title>
        <authorList>
            <person name="Cheng C.Y."/>
            <person name="Krishnakumar V."/>
            <person name="Chan A.P."/>
            <person name="Thibaud-Nissen F."/>
            <person name="Schobel S."/>
            <person name="Town C.D."/>
        </authorList>
    </citation>
    <scope>GENOME REANNOTATION</scope>
    <source>
        <strain>cv. Columbia</strain>
    </source>
</reference>
<reference key="3">
    <citation type="submission" date="2005-03" db="EMBL/GenBank/DDBJ databases">
        <title>Large-scale analysis of RIKEN Arabidopsis full-length (RAFL) cDNAs.</title>
        <authorList>
            <person name="Totoki Y."/>
            <person name="Seki M."/>
            <person name="Ishida J."/>
            <person name="Nakajima M."/>
            <person name="Enju A."/>
            <person name="Kamiya A."/>
            <person name="Narusaka M."/>
            <person name="Shin-i T."/>
            <person name="Nakagawa M."/>
            <person name="Sakamoto N."/>
            <person name="Oishi K."/>
            <person name="Kohara Y."/>
            <person name="Kobayashi M."/>
            <person name="Toyoda A."/>
            <person name="Sakaki Y."/>
            <person name="Sakurai T."/>
            <person name="Iida K."/>
            <person name="Akiyama K."/>
            <person name="Satou M."/>
            <person name="Toyoda T."/>
            <person name="Konagaya A."/>
            <person name="Carninci P."/>
            <person name="Kawai J."/>
            <person name="Hayashizaki Y."/>
            <person name="Shinozaki K."/>
        </authorList>
    </citation>
    <scope>NUCLEOTIDE SEQUENCE [LARGE SCALE MRNA]</scope>
    <source>
        <strain>cv. Columbia</strain>
    </source>
</reference>
<reference key="4">
    <citation type="journal article" date="2014" name="Plant Physiol.">
        <title>Functional and evolutionary analysis of the CASPARIAN STRIP MEMBRANE DOMAIN PROTEIN family.</title>
        <authorList>
            <person name="Roppolo D."/>
            <person name="Boeckmann B."/>
            <person name="Pfister A."/>
            <person name="Boutet E."/>
            <person name="Rubio M.C."/>
            <person name="Denervaud-Tendon V."/>
            <person name="Vermeer J.E."/>
            <person name="Gheyselinck J."/>
            <person name="Xenarios I."/>
            <person name="Geldner N."/>
        </authorList>
    </citation>
    <scope>GENE FAMILY</scope>
    <scope>NOMENCLATURE</scope>
</reference>
<accession>Q56X75</accession>
<gene>
    <name type="ordered locus">At2g39518</name>
    <name type="ORF">F12L6</name>
</gene>
<protein>
    <recommendedName>
        <fullName>CASP-like protein 4D2</fullName>
        <shortName>AtCASPL4D2</shortName>
    </recommendedName>
</protein>
<feature type="chain" id="PRO_0000308663" description="CASP-like protein 4D2">
    <location>
        <begin position="1"/>
        <end position="174"/>
    </location>
</feature>
<feature type="topological domain" description="Cytoplasmic" evidence="2">
    <location>
        <begin position="1"/>
        <end position="14"/>
    </location>
</feature>
<feature type="transmembrane region" description="Helical" evidence="2">
    <location>
        <begin position="15"/>
        <end position="35"/>
    </location>
</feature>
<feature type="topological domain" description="Extracellular" evidence="2">
    <location>
        <begin position="36"/>
        <end position="60"/>
    </location>
</feature>
<feature type="transmembrane region" description="Helical" evidence="2">
    <location>
        <begin position="61"/>
        <end position="81"/>
    </location>
</feature>
<feature type="topological domain" description="Cytoplasmic" evidence="2">
    <location>
        <begin position="82"/>
        <end position="97"/>
    </location>
</feature>
<feature type="transmembrane region" description="Helical" evidence="2">
    <location>
        <begin position="98"/>
        <end position="118"/>
    </location>
</feature>
<feature type="topological domain" description="Extracellular" evidence="2">
    <location>
        <begin position="119"/>
        <end position="150"/>
    </location>
</feature>
<feature type="transmembrane region" description="Helical" evidence="2">
    <location>
        <begin position="151"/>
        <end position="171"/>
    </location>
</feature>
<feature type="topological domain" description="Cytoplasmic" evidence="2">
    <location>
        <begin position="172"/>
        <end position="174"/>
    </location>
</feature>